<reference key="1">
    <citation type="journal article" date="2002" name="Nature">
        <title>Complete genome sequence of the model actinomycete Streptomyces coelicolor A3(2).</title>
        <authorList>
            <person name="Bentley S.D."/>
            <person name="Chater K.F."/>
            <person name="Cerdeno-Tarraga A.-M."/>
            <person name="Challis G.L."/>
            <person name="Thomson N.R."/>
            <person name="James K.D."/>
            <person name="Harris D.E."/>
            <person name="Quail M.A."/>
            <person name="Kieser H."/>
            <person name="Harper D."/>
            <person name="Bateman A."/>
            <person name="Brown S."/>
            <person name="Chandra G."/>
            <person name="Chen C.W."/>
            <person name="Collins M."/>
            <person name="Cronin A."/>
            <person name="Fraser A."/>
            <person name="Goble A."/>
            <person name="Hidalgo J."/>
            <person name="Hornsby T."/>
            <person name="Howarth S."/>
            <person name="Huang C.-H."/>
            <person name="Kieser T."/>
            <person name="Larke L."/>
            <person name="Murphy L.D."/>
            <person name="Oliver K."/>
            <person name="O'Neil S."/>
            <person name="Rabbinowitsch E."/>
            <person name="Rajandream M.A."/>
            <person name="Rutherford K.M."/>
            <person name="Rutter S."/>
            <person name="Seeger K."/>
            <person name="Saunders D."/>
            <person name="Sharp S."/>
            <person name="Squares R."/>
            <person name="Squares S."/>
            <person name="Taylor K."/>
            <person name="Warren T."/>
            <person name="Wietzorrek A."/>
            <person name="Woodward J.R."/>
            <person name="Barrell B.G."/>
            <person name="Parkhill J."/>
            <person name="Hopwood D.A."/>
        </authorList>
    </citation>
    <scope>NUCLEOTIDE SEQUENCE [LARGE SCALE GENOMIC DNA]</scope>
    <source>
        <strain>ATCC BAA-471 / A3(2) / M145</strain>
    </source>
</reference>
<sequence>MTVHPPVVGHCDELQVALGAFRASAHVTQRWGDRLAAVLGGGGRLLAAGNGGSAAQAQHLTAELVGRYRDDRPPFSAIALHADTSSTTAIANDYGVDEVFARQVRAHGRKGDVLMLLSTSGASANLLSAADAARAAGVRVWALTGRAPNPLMAGSDESLCVEAPSTATVQEIHLVAVHMICAAFDAALERGEHGARAAGSAASTGRAARRERAASTGRAAGAGRAAQRKRR</sequence>
<evidence type="ECO:0000255" key="1">
    <source>
        <dbReference type="HAMAP-Rule" id="MF_00067"/>
    </source>
</evidence>
<evidence type="ECO:0000256" key="2">
    <source>
        <dbReference type="SAM" id="MobiDB-lite"/>
    </source>
</evidence>
<feature type="chain" id="PRO_0000136546" description="Phosphoheptose isomerase">
    <location>
        <begin position="1"/>
        <end position="231"/>
    </location>
</feature>
<feature type="domain" description="SIS" evidence="1">
    <location>
        <begin position="35"/>
        <end position="190"/>
    </location>
</feature>
<feature type="region of interest" description="Disordered" evidence="2">
    <location>
        <begin position="197"/>
        <end position="231"/>
    </location>
</feature>
<feature type="compositionally biased region" description="Low complexity" evidence="2">
    <location>
        <begin position="197"/>
        <end position="206"/>
    </location>
</feature>
<feature type="compositionally biased region" description="Low complexity" evidence="2">
    <location>
        <begin position="214"/>
        <end position="225"/>
    </location>
</feature>
<feature type="binding site" evidence="1">
    <location>
        <begin position="50"/>
        <end position="52"/>
    </location>
    <ligand>
        <name>substrate</name>
    </ligand>
</feature>
<feature type="binding site" evidence="1">
    <location>
        <position position="59"/>
    </location>
    <ligand>
        <name>Zn(2+)</name>
        <dbReference type="ChEBI" id="CHEBI:29105"/>
    </ligand>
</feature>
<feature type="binding site" evidence="1">
    <location>
        <position position="63"/>
    </location>
    <ligand>
        <name>substrate</name>
    </ligand>
</feature>
<feature type="binding site" evidence="1">
    <location>
        <position position="63"/>
    </location>
    <ligand>
        <name>Zn(2+)</name>
        <dbReference type="ChEBI" id="CHEBI:29105"/>
    </ligand>
</feature>
<feature type="binding site" evidence="1">
    <location>
        <begin position="92"/>
        <end position="93"/>
    </location>
    <ligand>
        <name>substrate</name>
    </ligand>
</feature>
<feature type="binding site" evidence="1">
    <location>
        <begin position="118"/>
        <end position="120"/>
    </location>
    <ligand>
        <name>substrate</name>
    </ligand>
</feature>
<feature type="binding site" evidence="1">
    <location>
        <position position="123"/>
    </location>
    <ligand>
        <name>substrate</name>
    </ligand>
</feature>
<feature type="binding site" evidence="1">
    <location>
        <position position="170"/>
    </location>
    <ligand>
        <name>substrate</name>
    </ligand>
</feature>
<feature type="binding site" evidence="1">
    <location>
        <position position="170"/>
    </location>
    <ligand>
        <name>Zn(2+)</name>
        <dbReference type="ChEBI" id="CHEBI:29105"/>
    </ligand>
</feature>
<feature type="binding site" evidence="1">
    <location>
        <position position="178"/>
    </location>
    <ligand>
        <name>Zn(2+)</name>
        <dbReference type="ChEBI" id="CHEBI:29105"/>
    </ligand>
</feature>
<protein>
    <recommendedName>
        <fullName evidence="1">Phosphoheptose isomerase</fullName>
        <ecNumber evidence="1">5.3.1.28</ecNumber>
    </recommendedName>
    <alternativeName>
        <fullName evidence="1">Sedoheptulose 7-phosphate isomerase</fullName>
    </alternativeName>
</protein>
<keyword id="KW-0119">Carbohydrate metabolism</keyword>
<keyword id="KW-0963">Cytoplasm</keyword>
<keyword id="KW-0413">Isomerase</keyword>
<keyword id="KW-0479">Metal-binding</keyword>
<keyword id="KW-1185">Reference proteome</keyword>
<keyword id="KW-0862">Zinc</keyword>
<comment type="function">
    <text evidence="1">Catalyzes the isomerization of sedoheptulose 7-phosphate in D-glycero-D-manno-heptose 7-phosphate.</text>
</comment>
<comment type="catalytic activity">
    <reaction evidence="1">
        <text>2 D-sedoheptulose 7-phosphate = D-glycero-alpha-D-manno-heptose 7-phosphate + D-glycero-beta-D-manno-heptose 7-phosphate</text>
        <dbReference type="Rhea" id="RHEA:27489"/>
        <dbReference type="ChEBI" id="CHEBI:57483"/>
        <dbReference type="ChEBI" id="CHEBI:60203"/>
        <dbReference type="ChEBI" id="CHEBI:60204"/>
        <dbReference type="EC" id="5.3.1.28"/>
    </reaction>
</comment>
<comment type="cofactor">
    <cofactor evidence="1">
        <name>Zn(2+)</name>
        <dbReference type="ChEBI" id="CHEBI:29105"/>
    </cofactor>
    <text evidence="1">Binds 1 zinc ion per subunit.</text>
</comment>
<comment type="pathway">
    <text evidence="1">Carbohydrate biosynthesis; D-glycero-D-manno-heptose 7-phosphate biosynthesis; D-glycero-alpha-D-manno-heptose 7-phosphate and D-glycero-beta-D-manno-heptose 7-phosphate from sedoheptulose 7-phosphate: step 1/1.</text>
</comment>
<comment type="subcellular location">
    <subcellularLocation>
        <location evidence="1">Cytoplasm</location>
    </subcellularLocation>
</comment>
<comment type="miscellaneous">
    <text evidence="1">The reaction produces a racemic mixture of D-glycero-alpha-D-manno-heptose 7-phosphate and D-glycero-beta-D-manno-heptose 7-phosphate.</text>
</comment>
<comment type="similarity">
    <text evidence="1">Belongs to the SIS family. GmhA subfamily.</text>
</comment>
<dbReference type="EC" id="5.3.1.28" evidence="1"/>
<dbReference type="EMBL" id="AL939126">
    <property type="protein sequence ID" value="CAB36594.1"/>
    <property type="molecule type" value="Genomic_DNA"/>
</dbReference>
<dbReference type="PIR" id="T34840">
    <property type="entry name" value="T34840"/>
</dbReference>
<dbReference type="RefSeq" id="NP_630289.1">
    <property type="nucleotide sequence ID" value="NC_003888.3"/>
</dbReference>
<dbReference type="RefSeq" id="WP_011030722.1">
    <property type="nucleotide sequence ID" value="NZ_VNID01000009.1"/>
</dbReference>
<dbReference type="SMR" id="Q9Z5B6"/>
<dbReference type="FunCoup" id="Q9Z5B6">
    <property type="interactions" value="28"/>
</dbReference>
<dbReference type="STRING" id="100226.gene:17763845"/>
<dbReference type="PaxDb" id="100226-SCO6186"/>
<dbReference type="KEGG" id="sco:SCO6186"/>
<dbReference type="PATRIC" id="fig|100226.15.peg.6296"/>
<dbReference type="eggNOG" id="COG0279">
    <property type="taxonomic scope" value="Bacteria"/>
</dbReference>
<dbReference type="HOGENOM" id="CLU_080999_0_0_11"/>
<dbReference type="InParanoid" id="Q9Z5B6"/>
<dbReference type="OrthoDB" id="9810929at2"/>
<dbReference type="PhylomeDB" id="Q9Z5B6"/>
<dbReference type="UniPathway" id="UPA00041">
    <property type="reaction ID" value="UER00436"/>
</dbReference>
<dbReference type="Proteomes" id="UP000001973">
    <property type="component" value="Chromosome"/>
</dbReference>
<dbReference type="GO" id="GO:0005737">
    <property type="term" value="C:cytoplasm"/>
    <property type="evidence" value="ECO:0007669"/>
    <property type="project" value="UniProtKB-SubCell"/>
</dbReference>
<dbReference type="GO" id="GO:1990102">
    <property type="term" value="C:DnaA-DiaA complex"/>
    <property type="evidence" value="ECO:0000318"/>
    <property type="project" value="GO_Central"/>
</dbReference>
<dbReference type="GO" id="GO:0097367">
    <property type="term" value="F:carbohydrate derivative binding"/>
    <property type="evidence" value="ECO:0007669"/>
    <property type="project" value="InterPro"/>
</dbReference>
<dbReference type="GO" id="GO:0008968">
    <property type="term" value="F:D-sedoheptulose 7-phosphate isomerase activity"/>
    <property type="evidence" value="ECO:0007669"/>
    <property type="project" value="UniProtKB-UniRule"/>
</dbReference>
<dbReference type="GO" id="GO:0008270">
    <property type="term" value="F:zinc ion binding"/>
    <property type="evidence" value="ECO:0007669"/>
    <property type="project" value="UniProtKB-UniRule"/>
</dbReference>
<dbReference type="GO" id="GO:0005975">
    <property type="term" value="P:carbohydrate metabolic process"/>
    <property type="evidence" value="ECO:0007669"/>
    <property type="project" value="UniProtKB-UniRule"/>
</dbReference>
<dbReference type="GO" id="GO:2001061">
    <property type="term" value="P:D-glycero-D-manno-heptose 7-phosphate biosynthetic process"/>
    <property type="evidence" value="ECO:0007669"/>
    <property type="project" value="UniProtKB-UniPathway"/>
</dbReference>
<dbReference type="GO" id="GO:0032298">
    <property type="term" value="P:positive regulation of DNA-templated DNA replication initiation"/>
    <property type="evidence" value="ECO:0000318"/>
    <property type="project" value="GO_Central"/>
</dbReference>
<dbReference type="CDD" id="cd05006">
    <property type="entry name" value="SIS_GmhA"/>
    <property type="match status" value="1"/>
</dbReference>
<dbReference type="Gene3D" id="3.40.50.10490">
    <property type="entry name" value="Glucose-6-phosphate isomerase like protein, domain 1"/>
    <property type="match status" value="1"/>
</dbReference>
<dbReference type="HAMAP" id="MF_00067">
    <property type="entry name" value="GmhA"/>
    <property type="match status" value="1"/>
</dbReference>
<dbReference type="InterPro" id="IPR035461">
    <property type="entry name" value="GmhA/DiaA"/>
</dbReference>
<dbReference type="InterPro" id="IPR004515">
    <property type="entry name" value="Phosphoheptose_Isoase"/>
</dbReference>
<dbReference type="InterPro" id="IPR001347">
    <property type="entry name" value="SIS_dom"/>
</dbReference>
<dbReference type="InterPro" id="IPR046348">
    <property type="entry name" value="SIS_dom_sf"/>
</dbReference>
<dbReference type="InterPro" id="IPR050099">
    <property type="entry name" value="SIS_GmhA/DiaA_subfam"/>
</dbReference>
<dbReference type="PANTHER" id="PTHR30390:SF6">
    <property type="entry name" value="DNAA INITIATOR-ASSOCIATING PROTEIN DIAA"/>
    <property type="match status" value="1"/>
</dbReference>
<dbReference type="PANTHER" id="PTHR30390">
    <property type="entry name" value="SEDOHEPTULOSE 7-PHOSPHATE ISOMERASE / DNAA INITIATOR-ASSOCIATING FACTOR FOR REPLICATION INITIATION"/>
    <property type="match status" value="1"/>
</dbReference>
<dbReference type="Pfam" id="PF13580">
    <property type="entry name" value="SIS_2"/>
    <property type="match status" value="1"/>
</dbReference>
<dbReference type="SUPFAM" id="SSF53697">
    <property type="entry name" value="SIS domain"/>
    <property type="match status" value="1"/>
</dbReference>
<dbReference type="PROSITE" id="PS51464">
    <property type="entry name" value="SIS"/>
    <property type="match status" value="1"/>
</dbReference>
<proteinExistence type="inferred from homology"/>
<name>GMHA_STRCO</name>
<gene>
    <name evidence="1" type="primary">gmhA</name>
    <name type="ordered locus">SCO6186</name>
    <name type="ORF">SC2G5.07</name>
</gene>
<accession>Q9Z5B6</accession>
<organism>
    <name type="scientific">Streptomyces coelicolor (strain ATCC BAA-471 / A3(2) / M145)</name>
    <dbReference type="NCBI Taxonomy" id="100226"/>
    <lineage>
        <taxon>Bacteria</taxon>
        <taxon>Bacillati</taxon>
        <taxon>Actinomycetota</taxon>
        <taxon>Actinomycetes</taxon>
        <taxon>Kitasatosporales</taxon>
        <taxon>Streptomycetaceae</taxon>
        <taxon>Streptomyces</taxon>
        <taxon>Streptomyces albidoflavus group</taxon>
    </lineage>
</organism>